<feature type="chain" id="PRO_1000092373" description="Elongation factor 4">
    <location>
        <begin position="1"/>
        <end position="626"/>
    </location>
</feature>
<feature type="domain" description="tr-type G">
    <location>
        <begin position="14"/>
        <end position="195"/>
    </location>
</feature>
<feature type="region of interest" description="Disordered" evidence="2">
    <location>
        <begin position="603"/>
        <end position="626"/>
    </location>
</feature>
<feature type="compositionally biased region" description="Basic and acidic residues" evidence="2">
    <location>
        <begin position="609"/>
        <end position="626"/>
    </location>
</feature>
<feature type="binding site" evidence="1">
    <location>
        <begin position="26"/>
        <end position="31"/>
    </location>
    <ligand>
        <name>GTP</name>
        <dbReference type="ChEBI" id="CHEBI:37565"/>
    </ligand>
</feature>
<feature type="binding site" evidence="1">
    <location>
        <begin position="142"/>
        <end position="145"/>
    </location>
    <ligand>
        <name>GTP</name>
        <dbReference type="ChEBI" id="CHEBI:37565"/>
    </ligand>
</feature>
<comment type="function">
    <text evidence="1">Required for accurate and efficient protein synthesis under certain stress conditions. May act as a fidelity factor of the translation reaction, by catalyzing a one-codon backward translocation of tRNAs on improperly translocated ribosomes. Back-translocation proceeds from a post-translocation (POST) complex to a pre-translocation (PRE) complex, thus giving elongation factor G a second chance to translocate the tRNAs correctly. Binds to ribosomes in a GTP-dependent manner.</text>
</comment>
<comment type="catalytic activity">
    <reaction evidence="1">
        <text>GTP + H2O = GDP + phosphate + H(+)</text>
        <dbReference type="Rhea" id="RHEA:19669"/>
        <dbReference type="ChEBI" id="CHEBI:15377"/>
        <dbReference type="ChEBI" id="CHEBI:15378"/>
        <dbReference type="ChEBI" id="CHEBI:37565"/>
        <dbReference type="ChEBI" id="CHEBI:43474"/>
        <dbReference type="ChEBI" id="CHEBI:58189"/>
        <dbReference type="EC" id="3.6.5.n1"/>
    </reaction>
</comment>
<comment type="subcellular location">
    <subcellularLocation>
        <location evidence="1">Cell membrane</location>
        <topology evidence="1">Peripheral membrane protein</topology>
        <orientation evidence="1">Cytoplasmic side</orientation>
    </subcellularLocation>
</comment>
<comment type="similarity">
    <text evidence="1">Belongs to the TRAFAC class translation factor GTPase superfamily. Classic translation factor GTPase family. LepA subfamily.</text>
</comment>
<name>LEPA_BIFLD</name>
<organism>
    <name type="scientific">Bifidobacterium longum (strain DJO10A)</name>
    <dbReference type="NCBI Taxonomy" id="205913"/>
    <lineage>
        <taxon>Bacteria</taxon>
        <taxon>Bacillati</taxon>
        <taxon>Actinomycetota</taxon>
        <taxon>Actinomycetes</taxon>
        <taxon>Bifidobacteriales</taxon>
        <taxon>Bifidobacteriaceae</taxon>
        <taxon>Bifidobacterium</taxon>
    </lineage>
</organism>
<keyword id="KW-1003">Cell membrane</keyword>
<keyword id="KW-0342">GTP-binding</keyword>
<keyword id="KW-0378">Hydrolase</keyword>
<keyword id="KW-0472">Membrane</keyword>
<keyword id="KW-0547">Nucleotide-binding</keyword>
<keyword id="KW-0648">Protein biosynthesis</keyword>
<accession>B3DSA9</accession>
<reference key="1">
    <citation type="journal article" date="2008" name="BMC Genomics">
        <title>Comparative genomic analysis of the gut bacterium Bifidobacterium longum reveals loci susceptible to deletion during pure culture growth.</title>
        <authorList>
            <person name="Lee J.H."/>
            <person name="Karamychev V.N."/>
            <person name="Kozyavkin S.A."/>
            <person name="Mills D."/>
            <person name="Pavlov A.R."/>
            <person name="Pavlova N.V."/>
            <person name="Polouchine N.N."/>
            <person name="Richardson P.M."/>
            <person name="Shakhova V.V."/>
            <person name="Slesarev A.I."/>
            <person name="Weimer B."/>
            <person name="O'Sullivan D.J."/>
        </authorList>
    </citation>
    <scope>NUCLEOTIDE SEQUENCE [LARGE SCALE GENOMIC DNA]</scope>
    <source>
        <strain>DJO10A</strain>
    </source>
</reference>
<evidence type="ECO:0000255" key="1">
    <source>
        <dbReference type="HAMAP-Rule" id="MF_00071"/>
    </source>
</evidence>
<evidence type="ECO:0000256" key="2">
    <source>
        <dbReference type="SAM" id="MobiDB-lite"/>
    </source>
</evidence>
<gene>
    <name evidence="1" type="primary">lepA</name>
    <name type="ordered locus">BLD_0582</name>
</gene>
<protein>
    <recommendedName>
        <fullName evidence="1">Elongation factor 4</fullName>
        <shortName evidence="1">EF-4</shortName>
        <ecNumber evidence="1">3.6.5.n1</ecNumber>
    </recommendedName>
    <alternativeName>
        <fullName evidence="1">Ribosomal back-translocase LepA</fullName>
    </alternativeName>
</protein>
<proteinExistence type="inferred from homology"/>
<dbReference type="EC" id="3.6.5.n1" evidence="1"/>
<dbReference type="EMBL" id="CP000605">
    <property type="protein sequence ID" value="ACD98028.1"/>
    <property type="molecule type" value="Genomic_DNA"/>
</dbReference>
<dbReference type="RefSeq" id="WP_007053360.1">
    <property type="nucleotide sequence ID" value="NZ_AABM02000001.1"/>
</dbReference>
<dbReference type="SMR" id="B3DSA9"/>
<dbReference type="GeneID" id="69578012"/>
<dbReference type="KEGG" id="blj:BLD_0582"/>
<dbReference type="HOGENOM" id="CLU_009995_3_3_11"/>
<dbReference type="Proteomes" id="UP000002419">
    <property type="component" value="Chromosome"/>
</dbReference>
<dbReference type="GO" id="GO:0005886">
    <property type="term" value="C:plasma membrane"/>
    <property type="evidence" value="ECO:0007669"/>
    <property type="project" value="UniProtKB-SubCell"/>
</dbReference>
<dbReference type="GO" id="GO:0005525">
    <property type="term" value="F:GTP binding"/>
    <property type="evidence" value="ECO:0007669"/>
    <property type="project" value="UniProtKB-UniRule"/>
</dbReference>
<dbReference type="GO" id="GO:0003924">
    <property type="term" value="F:GTPase activity"/>
    <property type="evidence" value="ECO:0007669"/>
    <property type="project" value="UniProtKB-UniRule"/>
</dbReference>
<dbReference type="GO" id="GO:0043022">
    <property type="term" value="F:ribosome binding"/>
    <property type="evidence" value="ECO:0007669"/>
    <property type="project" value="UniProtKB-UniRule"/>
</dbReference>
<dbReference type="GO" id="GO:0003746">
    <property type="term" value="F:translation elongation factor activity"/>
    <property type="evidence" value="ECO:0007669"/>
    <property type="project" value="UniProtKB-UniRule"/>
</dbReference>
<dbReference type="GO" id="GO:0045727">
    <property type="term" value="P:positive regulation of translation"/>
    <property type="evidence" value="ECO:0007669"/>
    <property type="project" value="UniProtKB-UniRule"/>
</dbReference>
<dbReference type="CDD" id="cd03699">
    <property type="entry name" value="EF4_II"/>
    <property type="match status" value="1"/>
</dbReference>
<dbReference type="CDD" id="cd16260">
    <property type="entry name" value="EF4_III"/>
    <property type="match status" value="1"/>
</dbReference>
<dbReference type="CDD" id="cd01890">
    <property type="entry name" value="LepA"/>
    <property type="match status" value="1"/>
</dbReference>
<dbReference type="CDD" id="cd03709">
    <property type="entry name" value="lepA_C"/>
    <property type="match status" value="1"/>
</dbReference>
<dbReference type="FunFam" id="3.40.50.300:FF:000078">
    <property type="entry name" value="Elongation factor 4"/>
    <property type="match status" value="1"/>
</dbReference>
<dbReference type="FunFam" id="2.40.30.10:FF:000015">
    <property type="entry name" value="Translation factor GUF1, mitochondrial"/>
    <property type="match status" value="1"/>
</dbReference>
<dbReference type="FunFam" id="3.30.70.240:FF:000007">
    <property type="entry name" value="Translation factor GUF1, mitochondrial"/>
    <property type="match status" value="1"/>
</dbReference>
<dbReference type="FunFam" id="3.30.70.2570:FF:000001">
    <property type="entry name" value="Translation factor GUF1, mitochondrial"/>
    <property type="match status" value="1"/>
</dbReference>
<dbReference type="FunFam" id="3.30.70.870:FF:000004">
    <property type="entry name" value="Translation factor GUF1, mitochondrial"/>
    <property type="match status" value="1"/>
</dbReference>
<dbReference type="Gene3D" id="3.30.70.240">
    <property type="match status" value="1"/>
</dbReference>
<dbReference type="Gene3D" id="3.30.70.2570">
    <property type="entry name" value="Elongation factor 4, C-terminal domain"/>
    <property type="match status" value="1"/>
</dbReference>
<dbReference type="Gene3D" id="3.30.70.870">
    <property type="entry name" value="Elongation Factor G (Translational Gtpase), domain 3"/>
    <property type="match status" value="1"/>
</dbReference>
<dbReference type="Gene3D" id="3.40.50.300">
    <property type="entry name" value="P-loop containing nucleotide triphosphate hydrolases"/>
    <property type="match status" value="1"/>
</dbReference>
<dbReference type="Gene3D" id="2.40.30.10">
    <property type="entry name" value="Translation factors"/>
    <property type="match status" value="1"/>
</dbReference>
<dbReference type="HAMAP" id="MF_00071">
    <property type="entry name" value="LepA"/>
    <property type="match status" value="1"/>
</dbReference>
<dbReference type="InterPro" id="IPR006297">
    <property type="entry name" value="EF-4"/>
</dbReference>
<dbReference type="InterPro" id="IPR035647">
    <property type="entry name" value="EFG_III/V"/>
</dbReference>
<dbReference type="InterPro" id="IPR000640">
    <property type="entry name" value="EFG_V-like"/>
</dbReference>
<dbReference type="InterPro" id="IPR004161">
    <property type="entry name" value="EFTu-like_2"/>
</dbReference>
<dbReference type="InterPro" id="IPR031157">
    <property type="entry name" value="G_TR_CS"/>
</dbReference>
<dbReference type="InterPro" id="IPR038363">
    <property type="entry name" value="LepA_C_sf"/>
</dbReference>
<dbReference type="InterPro" id="IPR013842">
    <property type="entry name" value="LepA_CTD"/>
</dbReference>
<dbReference type="InterPro" id="IPR035654">
    <property type="entry name" value="LepA_IV"/>
</dbReference>
<dbReference type="InterPro" id="IPR027417">
    <property type="entry name" value="P-loop_NTPase"/>
</dbReference>
<dbReference type="InterPro" id="IPR005225">
    <property type="entry name" value="Small_GTP-bd"/>
</dbReference>
<dbReference type="InterPro" id="IPR000795">
    <property type="entry name" value="T_Tr_GTP-bd_dom"/>
</dbReference>
<dbReference type="InterPro" id="IPR009000">
    <property type="entry name" value="Transl_B-barrel_sf"/>
</dbReference>
<dbReference type="NCBIfam" id="TIGR01393">
    <property type="entry name" value="lepA"/>
    <property type="match status" value="1"/>
</dbReference>
<dbReference type="NCBIfam" id="TIGR00231">
    <property type="entry name" value="small_GTP"/>
    <property type="match status" value="1"/>
</dbReference>
<dbReference type="PANTHER" id="PTHR43512:SF4">
    <property type="entry name" value="TRANSLATION FACTOR GUF1 HOMOLOG, CHLOROPLASTIC"/>
    <property type="match status" value="1"/>
</dbReference>
<dbReference type="PANTHER" id="PTHR43512">
    <property type="entry name" value="TRANSLATION FACTOR GUF1-RELATED"/>
    <property type="match status" value="1"/>
</dbReference>
<dbReference type="Pfam" id="PF00679">
    <property type="entry name" value="EFG_C"/>
    <property type="match status" value="1"/>
</dbReference>
<dbReference type="Pfam" id="PF00009">
    <property type="entry name" value="GTP_EFTU"/>
    <property type="match status" value="1"/>
</dbReference>
<dbReference type="Pfam" id="PF03144">
    <property type="entry name" value="GTP_EFTU_D2"/>
    <property type="match status" value="1"/>
</dbReference>
<dbReference type="Pfam" id="PF06421">
    <property type="entry name" value="LepA_C"/>
    <property type="match status" value="1"/>
</dbReference>
<dbReference type="PRINTS" id="PR00315">
    <property type="entry name" value="ELONGATNFCT"/>
</dbReference>
<dbReference type="SMART" id="SM00838">
    <property type="entry name" value="EFG_C"/>
    <property type="match status" value="1"/>
</dbReference>
<dbReference type="SUPFAM" id="SSF54980">
    <property type="entry name" value="EF-G C-terminal domain-like"/>
    <property type="match status" value="2"/>
</dbReference>
<dbReference type="SUPFAM" id="SSF52540">
    <property type="entry name" value="P-loop containing nucleoside triphosphate hydrolases"/>
    <property type="match status" value="1"/>
</dbReference>
<dbReference type="SUPFAM" id="SSF50447">
    <property type="entry name" value="Translation proteins"/>
    <property type="match status" value="1"/>
</dbReference>
<dbReference type="PROSITE" id="PS00301">
    <property type="entry name" value="G_TR_1"/>
    <property type="match status" value="1"/>
</dbReference>
<dbReference type="PROSITE" id="PS51722">
    <property type="entry name" value="G_TR_2"/>
    <property type="match status" value="1"/>
</dbReference>
<sequence>MVVQHNQPGSTDQSVIRNFCIIAHIDHGKSTVADRILQLSGIVPEREMRDRFLDRMDIEQERGITIKSQAVRVPWTFDGTEYTLGMIDTPGHVDFTYEVSRALAACEGAVLLVDATQGIEAQTLSNLYMAIDHDLAIIPVLNKIDLPSAEPDKHAEEIAGLIGCEPSDVLRVSGKTGEGVADLLDQIVMDVPAPHGDPDAPARALIFDSVYDSYRGIVTYIRMEDGELHDREKVHMMGIGMTHDPIEIGVISPDMTRTKALGAGEVGYIITGAKDVSQSKVGDTLTSAVRPAAEPLPGYRDPKPMVYAGLFPIDNAQFPELRDALDKLKLNDAALIYTPETSVALGFGFRCGFLGLLHMEIVNERLSREFGLDLIQTAPNVTYDVTAEDGSQHHVTNPSEFPDGKIKKIVEPMVAADIITPKEFIGAVMDLCQDHRGIMGTMEYISTDRVEMHYRIPLAEIVFDFFDQLKSRTKGYASLDYHEDGEQSADLVKVDILIQGEKVDAFSAIVHRDKAYSYGVMMTKKLRSLIPRQQFEIPIQAAIGSRIIARENIRALRKDVLAKCYGGDITRKRKLLEKQKAGKKRMKMLGHVEVPQEAFIAALSTGEDSNDRDTKDKIRAAQKTEG</sequence>